<protein>
    <recommendedName>
        <fullName evidence="4">Iron-sulfur cluster co-chaperone protein HscB</fullName>
    </recommendedName>
    <component>
        <recommendedName>
            <fullName>Iron-sulfur cluster co-chaperone protein HscB, mitochondrial</fullName>
            <shortName evidence="1">C-HSC20</shortName>
        </recommendedName>
    </component>
    <component>
        <recommendedName>
            <fullName>Iron-sulfur cluster co-chaperone protein HscB, cytoplasmic</fullName>
        </recommendedName>
    </component>
</protein>
<comment type="function">
    <molecule>Iron-sulfur cluster co-chaperone protein HscB, mitochondrial</molecule>
    <text evidence="1 3">Acts as a co-chaperone in iron-sulfur cluster assembly in mitochondria. Required for incorporation of iron-sulfur clusters into SDHB, the iron-sulfur protein subunit of succinate dehydrogenase that is involved in complex II of the mitochondrial electron transport chain. Recruited to SDHB by interaction with SDHAF1 which first binds SDHB and then recruits the iron-sulfur transfer complex formed by HSC20, HSPA9 and ISCU through direct binding to HSC20 (By similarity). Plays an essential role in hematopoiesis (PubMed:32634119).</text>
</comment>
<comment type="function">
    <molecule>Iron-sulfur cluster co-chaperone protein HscB, cytoplasmic</molecule>
    <text evidence="1">Acts as a co-chaperone in iron-sulfur cluster assembly in the cytoplasm. Also mediates complex formation between components of the cytosolic iron-sulfur biogenesis pathway and the CIA targeting complex composed of CIAO1, DIPK1B/FAM69B and MMS19 by binding directly to the scaffold protein ISCU and to CIAO1. This facilitates iron-sulfur cluster insertion into a number of cytoplasmic and nuclear proteins including POLD1, ELP3, DPYD and PPAT.</text>
</comment>
<comment type="pathway">
    <text>Cofactor biosynthesis; iron-sulfur cluster biosynthesis.</text>
</comment>
<comment type="subunit">
    <molecule>Iron-sulfur cluster co-chaperone protein HscB, mitochondrial</molecule>
    <text evidence="1">Interacts with ISCU and HSPA9 to form an iron-sulfur transfer complex. Interacts with SDHAF1 (via the first LYR motif); the interaction recruits the iron-sulfur transfer complex composed of HSC20, HSPA9 and ISCU and mediates the incorporation of iron-sulfur clusters into SDHB which also interacts with HSC20. Interacts with the cytoplasmic form of ISCU and with CIA complex member CIAO1 (via LYR motif).</text>
</comment>
<comment type="subunit">
    <molecule>Iron-sulfur cluster co-chaperone protein HscB, cytoplasmic</molecule>
    <text evidence="1">Homodimer. Interacts with ISCU (cytoplasmic form); this interaction stabilizes the (Fe-S) clusters on ISCU. Interacts with the CIA complex member CIAO1 (via LYR motif).</text>
</comment>
<comment type="subcellular location">
    <molecule>Iron-sulfur cluster co-chaperone protein HscB, cytoplasmic</molecule>
    <subcellularLocation>
        <location evidence="1">Cytoplasm</location>
    </subcellularLocation>
</comment>
<comment type="subcellular location">
    <molecule>Iron-sulfur cluster co-chaperone protein HscB, mitochondrial</molecule>
    <subcellularLocation>
        <location evidence="1">Mitochondrion</location>
    </subcellularLocation>
</comment>
<comment type="disruption phenotype">
    <text evidence="3">Knockout of the gene is embryonic lethal. Specific loss of the gene in erythroblasts is also lethal due to anemia.</text>
</comment>
<comment type="similarity">
    <text evidence="4">Belongs to the HscB family.</text>
</comment>
<comment type="sequence caution" evidence="4">
    <conflict type="erroneous initiation">
        <sequence resource="EMBL-CDS" id="AAH27641"/>
    </conflict>
    <text>Truncated N-terminus.</text>
</comment>
<evidence type="ECO:0000250" key="1">
    <source>
        <dbReference type="UniProtKB" id="Q8IWL3"/>
    </source>
</evidence>
<evidence type="ECO:0000255" key="2"/>
<evidence type="ECO:0000269" key="3">
    <source>
    </source>
</evidence>
<evidence type="ECO:0000305" key="4"/>
<evidence type="ECO:0000312" key="5">
    <source>
        <dbReference type="MGI" id="MGI:2141135"/>
    </source>
</evidence>
<keyword id="KW-0143">Chaperone</keyword>
<keyword id="KW-0963">Cytoplasm</keyword>
<keyword id="KW-0479">Metal-binding</keyword>
<keyword id="KW-0496">Mitochondrion</keyword>
<keyword id="KW-1185">Reference proteome</keyword>
<proteinExistence type="evidence at protein level"/>
<gene>
    <name evidence="5" type="primary">Hscb</name>
    <name type="synonym">Hsc20</name>
</gene>
<name>HSC20_MOUSE</name>
<dbReference type="EMBL" id="AK131961">
    <property type="protein sequence ID" value="BAE20904.1"/>
    <property type="molecule type" value="mRNA"/>
</dbReference>
<dbReference type="EMBL" id="BC027641">
    <property type="protein sequence ID" value="AAH27641.1"/>
    <property type="status" value="ALT_INIT"/>
    <property type="molecule type" value="mRNA"/>
</dbReference>
<dbReference type="CCDS" id="CCDS51613.1"/>
<dbReference type="RefSeq" id="NP_705799.2">
    <property type="nucleotide sequence ID" value="NM_153571.2"/>
</dbReference>
<dbReference type="SMR" id="Q8K3A0"/>
<dbReference type="BioGRID" id="221552">
    <property type="interactions" value="2"/>
</dbReference>
<dbReference type="FunCoup" id="Q8K3A0">
    <property type="interactions" value="1709"/>
</dbReference>
<dbReference type="STRING" id="10090.ENSMUSP00000062811"/>
<dbReference type="GlyGen" id="Q8K3A0">
    <property type="glycosylation" value="1 site, 1 N-linked glycan (1 site)"/>
</dbReference>
<dbReference type="iPTMnet" id="Q8K3A0"/>
<dbReference type="PhosphoSitePlus" id="Q8K3A0"/>
<dbReference type="REPRODUCTION-2DPAGE" id="IPI00170051"/>
<dbReference type="REPRODUCTION-2DPAGE" id="Q8K3A0"/>
<dbReference type="jPOST" id="Q8K3A0"/>
<dbReference type="PaxDb" id="10090-ENSMUSP00000062811"/>
<dbReference type="PeptideAtlas" id="Q8K3A0"/>
<dbReference type="ProteomicsDB" id="273275"/>
<dbReference type="Pumba" id="Q8K3A0"/>
<dbReference type="GeneID" id="100900"/>
<dbReference type="KEGG" id="mmu:100900"/>
<dbReference type="UCSC" id="uc008yrv.2">
    <property type="organism name" value="mouse"/>
</dbReference>
<dbReference type="AGR" id="MGI:2141135"/>
<dbReference type="CTD" id="150274"/>
<dbReference type="MGI" id="MGI:2141135">
    <property type="gene designation" value="Hscb"/>
</dbReference>
<dbReference type="eggNOG" id="KOG3192">
    <property type="taxonomic scope" value="Eukaryota"/>
</dbReference>
<dbReference type="InParanoid" id="Q8K3A0"/>
<dbReference type="OrthoDB" id="448954at2759"/>
<dbReference type="PhylomeDB" id="Q8K3A0"/>
<dbReference type="TreeFam" id="TF319992"/>
<dbReference type="Reactome" id="R-MMU-1268020">
    <property type="pathway name" value="Mitochondrial protein import"/>
</dbReference>
<dbReference type="Reactome" id="R-MMU-1362409">
    <property type="pathway name" value="Mitochondrial iron-sulfur cluster biogenesis"/>
</dbReference>
<dbReference type="Reactome" id="R-MMU-6799198">
    <property type="pathway name" value="Complex I biogenesis"/>
</dbReference>
<dbReference type="Reactome" id="R-MMU-9865881">
    <property type="pathway name" value="Complex III assembly"/>
</dbReference>
<dbReference type="UniPathway" id="UPA00266"/>
<dbReference type="BioGRID-ORCS" id="100900">
    <property type="hits" value="31 hits in 78 CRISPR screens"/>
</dbReference>
<dbReference type="ChiTaRS" id="Hscb">
    <property type="organism name" value="mouse"/>
</dbReference>
<dbReference type="PRO" id="PR:Q8K3A0"/>
<dbReference type="Proteomes" id="UP000000589">
    <property type="component" value="Unplaced"/>
</dbReference>
<dbReference type="RNAct" id="Q8K3A0">
    <property type="molecule type" value="protein"/>
</dbReference>
<dbReference type="GO" id="GO:0005739">
    <property type="term" value="C:mitochondrion"/>
    <property type="evidence" value="ECO:0007005"/>
    <property type="project" value="MGI"/>
</dbReference>
<dbReference type="GO" id="GO:0001671">
    <property type="term" value="F:ATPase activator activity"/>
    <property type="evidence" value="ECO:0007669"/>
    <property type="project" value="InterPro"/>
</dbReference>
<dbReference type="GO" id="GO:0046872">
    <property type="term" value="F:metal ion binding"/>
    <property type="evidence" value="ECO:0007669"/>
    <property type="project" value="UniProtKB-KW"/>
</dbReference>
<dbReference type="GO" id="GO:0051087">
    <property type="term" value="F:protein-folding chaperone binding"/>
    <property type="evidence" value="ECO:0007669"/>
    <property type="project" value="InterPro"/>
</dbReference>
<dbReference type="GO" id="GO:0044571">
    <property type="term" value="P:[2Fe-2S] cluster assembly"/>
    <property type="evidence" value="ECO:0007669"/>
    <property type="project" value="InterPro"/>
</dbReference>
<dbReference type="GO" id="GO:0060319">
    <property type="term" value="P:primitive erythrocyte differentiation"/>
    <property type="evidence" value="ECO:0000315"/>
    <property type="project" value="UniProtKB"/>
</dbReference>
<dbReference type="GO" id="GO:0060215">
    <property type="term" value="P:primitive hemopoiesis"/>
    <property type="evidence" value="ECO:0000315"/>
    <property type="project" value="UniProtKB"/>
</dbReference>
<dbReference type="GO" id="GO:0051259">
    <property type="term" value="P:protein complex oligomerization"/>
    <property type="evidence" value="ECO:0007669"/>
    <property type="project" value="InterPro"/>
</dbReference>
<dbReference type="FunFam" id="1.20.1280.20:FF:000002">
    <property type="entry name" value="HscB mitochondrial iron-sulfur cluster co-chaperone"/>
    <property type="match status" value="1"/>
</dbReference>
<dbReference type="FunFam" id="1.10.287.110:FF:000042">
    <property type="entry name" value="Iron-sulfur cluster co-chaperone protein HscB, mitochondrial"/>
    <property type="match status" value="1"/>
</dbReference>
<dbReference type="Gene3D" id="1.10.287.110">
    <property type="entry name" value="DnaJ domain"/>
    <property type="match status" value="1"/>
</dbReference>
<dbReference type="Gene3D" id="1.20.1280.20">
    <property type="entry name" value="HscB, C-terminal domain"/>
    <property type="match status" value="1"/>
</dbReference>
<dbReference type="HAMAP" id="MF_00682">
    <property type="entry name" value="HscB"/>
    <property type="match status" value="1"/>
</dbReference>
<dbReference type="InterPro" id="IPR004640">
    <property type="entry name" value="HscB"/>
</dbReference>
<dbReference type="InterPro" id="IPR040682">
    <property type="entry name" value="HscB_4_cys"/>
</dbReference>
<dbReference type="InterPro" id="IPR036386">
    <property type="entry name" value="HscB_C_sf"/>
</dbReference>
<dbReference type="InterPro" id="IPR009073">
    <property type="entry name" value="HscB_oligo_C"/>
</dbReference>
<dbReference type="InterPro" id="IPR036869">
    <property type="entry name" value="J_dom_sf"/>
</dbReference>
<dbReference type="NCBIfam" id="TIGR00714">
    <property type="entry name" value="hscB"/>
    <property type="match status" value="1"/>
</dbReference>
<dbReference type="PANTHER" id="PTHR14021">
    <property type="entry name" value="IRON-SULFUR CLUSTER CO-CHAPERONE PROTEIN HSCB"/>
    <property type="match status" value="1"/>
</dbReference>
<dbReference type="PANTHER" id="PTHR14021:SF15">
    <property type="entry name" value="IRON-SULFUR CLUSTER CO-CHAPERONE PROTEIN HSCB"/>
    <property type="match status" value="1"/>
</dbReference>
<dbReference type="Pfam" id="PF18256">
    <property type="entry name" value="HscB_4_cys"/>
    <property type="match status" value="1"/>
</dbReference>
<dbReference type="Pfam" id="PF07743">
    <property type="entry name" value="HSCB_C"/>
    <property type="match status" value="1"/>
</dbReference>
<dbReference type="SUPFAM" id="SSF46565">
    <property type="entry name" value="Chaperone J-domain"/>
    <property type="match status" value="1"/>
</dbReference>
<dbReference type="SUPFAM" id="SSF47144">
    <property type="entry name" value="HSC20 (HSCB), C-terminal oligomerisation domain"/>
    <property type="match status" value="1"/>
</dbReference>
<accession>Q8K3A0</accession>
<accession>Q3V294</accession>
<sequence>MWGCGARALLGVWEVRLAGFLGRRLLGSNAAAGKSIAPQCWNCGHAREAGCGDEFFCSHCRALQPPDPTRDYFSLMNCNRSFRVDVTKLQHRYQQLQRLVHPDFFSQKSQTEKHFSDKHSTLVNDAYKTLQAPLTRGLYLLKLQGIEIPEGTDYKADSQFLVEIMEINERLADAQSEAAMEEIEATVRAKQKEFTDNINSAFEQGDFEKAKELLTKMRYFSNIEEKIKLSKTPL</sequence>
<feature type="chain" id="PRO_0000446243" description="Iron-sulfur cluster co-chaperone protein HscB, cytoplasmic" evidence="1">
    <location>
        <begin position="1"/>
        <end position="234"/>
    </location>
</feature>
<feature type="chain" id="PRO_0000007263" description="Iron-sulfur cluster co-chaperone protein HscB, mitochondrial" evidence="2">
    <location>
        <begin position="30"/>
        <end position="234"/>
    </location>
</feature>
<feature type="domain" description="J">
    <location>
        <begin position="71"/>
        <end position="143"/>
    </location>
</feature>
<feature type="binding site" evidence="1">
    <location>
        <position position="40"/>
    </location>
    <ligand>
        <name>a divalent metal cation</name>
        <dbReference type="ChEBI" id="CHEBI:60240"/>
    </ligand>
</feature>
<feature type="binding site" evidence="1">
    <location>
        <position position="43"/>
    </location>
    <ligand>
        <name>a divalent metal cation</name>
        <dbReference type="ChEBI" id="CHEBI:60240"/>
    </ligand>
</feature>
<feature type="binding site" evidence="1">
    <location>
        <position position="57"/>
    </location>
    <ligand>
        <name>a divalent metal cation</name>
        <dbReference type="ChEBI" id="CHEBI:60240"/>
    </ligand>
</feature>
<feature type="binding site" evidence="1">
    <location>
        <position position="60"/>
    </location>
    <ligand>
        <name>a divalent metal cation</name>
        <dbReference type="ChEBI" id="CHEBI:60240"/>
    </ligand>
</feature>
<feature type="sequence conflict" description="In Ref. 1; BAE20904." evidence="4" ref="1">
    <original>A</original>
    <variation>V</variation>
    <location>
        <position position="49"/>
    </location>
</feature>
<reference key="1">
    <citation type="journal article" date="2005" name="Science">
        <title>The transcriptional landscape of the mammalian genome.</title>
        <authorList>
            <person name="Carninci P."/>
            <person name="Kasukawa T."/>
            <person name="Katayama S."/>
            <person name="Gough J."/>
            <person name="Frith M.C."/>
            <person name="Maeda N."/>
            <person name="Oyama R."/>
            <person name="Ravasi T."/>
            <person name="Lenhard B."/>
            <person name="Wells C."/>
            <person name="Kodzius R."/>
            <person name="Shimokawa K."/>
            <person name="Bajic V.B."/>
            <person name="Brenner S.E."/>
            <person name="Batalov S."/>
            <person name="Forrest A.R."/>
            <person name="Zavolan M."/>
            <person name="Davis M.J."/>
            <person name="Wilming L.G."/>
            <person name="Aidinis V."/>
            <person name="Allen J.E."/>
            <person name="Ambesi-Impiombato A."/>
            <person name="Apweiler R."/>
            <person name="Aturaliya R.N."/>
            <person name="Bailey T.L."/>
            <person name="Bansal M."/>
            <person name="Baxter L."/>
            <person name="Beisel K.W."/>
            <person name="Bersano T."/>
            <person name="Bono H."/>
            <person name="Chalk A.M."/>
            <person name="Chiu K.P."/>
            <person name="Choudhary V."/>
            <person name="Christoffels A."/>
            <person name="Clutterbuck D.R."/>
            <person name="Crowe M.L."/>
            <person name="Dalla E."/>
            <person name="Dalrymple B.P."/>
            <person name="de Bono B."/>
            <person name="Della Gatta G."/>
            <person name="di Bernardo D."/>
            <person name="Down T."/>
            <person name="Engstrom P."/>
            <person name="Fagiolini M."/>
            <person name="Faulkner G."/>
            <person name="Fletcher C.F."/>
            <person name="Fukushima T."/>
            <person name="Furuno M."/>
            <person name="Futaki S."/>
            <person name="Gariboldi M."/>
            <person name="Georgii-Hemming P."/>
            <person name="Gingeras T.R."/>
            <person name="Gojobori T."/>
            <person name="Green R.E."/>
            <person name="Gustincich S."/>
            <person name="Harbers M."/>
            <person name="Hayashi Y."/>
            <person name="Hensch T.K."/>
            <person name="Hirokawa N."/>
            <person name="Hill D."/>
            <person name="Huminiecki L."/>
            <person name="Iacono M."/>
            <person name="Ikeo K."/>
            <person name="Iwama A."/>
            <person name="Ishikawa T."/>
            <person name="Jakt M."/>
            <person name="Kanapin A."/>
            <person name="Katoh M."/>
            <person name="Kawasawa Y."/>
            <person name="Kelso J."/>
            <person name="Kitamura H."/>
            <person name="Kitano H."/>
            <person name="Kollias G."/>
            <person name="Krishnan S.P."/>
            <person name="Kruger A."/>
            <person name="Kummerfeld S.K."/>
            <person name="Kurochkin I.V."/>
            <person name="Lareau L.F."/>
            <person name="Lazarevic D."/>
            <person name="Lipovich L."/>
            <person name="Liu J."/>
            <person name="Liuni S."/>
            <person name="McWilliam S."/>
            <person name="Madan Babu M."/>
            <person name="Madera M."/>
            <person name="Marchionni L."/>
            <person name="Matsuda H."/>
            <person name="Matsuzawa S."/>
            <person name="Miki H."/>
            <person name="Mignone F."/>
            <person name="Miyake S."/>
            <person name="Morris K."/>
            <person name="Mottagui-Tabar S."/>
            <person name="Mulder N."/>
            <person name="Nakano N."/>
            <person name="Nakauchi H."/>
            <person name="Ng P."/>
            <person name="Nilsson R."/>
            <person name="Nishiguchi S."/>
            <person name="Nishikawa S."/>
            <person name="Nori F."/>
            <person name="Ohara O."/>
            <person name="Okazaki Y."/>
            <person name="Orlando V."/>
            <person name="Pang K.C."/>
            <person name="Pavan W.J."/>
            <person name="Pavesi G."/>
            <person name="Pesole G."/>
            <person name="Petrovsky N."/>
            <person name="Piazza S."/>
            <person name="Reed J."/>
            <person name="Reid J.F."/>
            <person name="Ring B.Z."/>
            <person name="Ringwald M."/>
            <person name="Rost B."/>
            <person name="Ruan Y."/>
            <person name="Salzberg S.L."/>
            <person name="Sandelin A."/>
            <person name="Schneider C."/>
            <person name="Schoenbach C."/>
            <person name="Sekiguchi K."/>
            <person name="Semple C.A."/>
            <person name="Seno S."/>
            <person name="Sessa L."/>
            <person name="Sheng Y."/>
            <person name="Shibata Y."/>
            <person name="Shimada H."/>
            <person name="Shimada K."/>
            <person name="Silva D."/>
            <person name="Sinclair B."/>
            <person name="Sperling S."/>
            <person name="Stupka E."/>
            <person name="Sugiura K."/>
            <person name="Sultana R."/>
            <person name="Takenaka Y."/>
            <person name="Taki K."/>
            <person name="Tammoja K."/>
            <person name="Tan S.L."/>
            <person name="Tang S."/>
            <person name="Taylor M.S."/>
            <person name="Tegner J."/>
            <person name="Teichmann S.A."/>
            <person name="Ueda H.R."/>
            <person name="van Nimwegen E."/>
            <person name="Verardo R."/>
            <person name="Wei C.L."/>
            <person name="Yagi K."/>
            <person name="Yamanishi H."/>
            <person name="Zabarovsky E."/>
            <person name="Zhu S."/>
            <person name="Zimmer A."/>
            <person name="Hide W."/>
            <person name="Bult C."/>
            <person name="Grimmond S.M."/>
            <person name="Teasdale R.D."/>
            <person name="Liu E.T."/>
            <person name="Brusic V."/>
            <person name="Quackenbush J."/>
            <person name="Wahlestedt C."/>
            <person name="Mattick J.S."/>
            <person name="Hume D.A."/>
            <person name="Kai C."/>
            <person name="Sasaki D."/>
            <person name="Tomaru Y."/>
            <person name="Fukuda S."/>
            <person name="Kanamori-Katayama M."/>
            <person name="Suzuki M."/>
            <person name="Aoki J."/>
            <person name="Arakawa T."/>
            <person name="Iida J."/>
            <person name="Imamura K."/>
            <person name="Itoh M."/>
            <person name="Kato T."/>
            <person name="Kawaji H."/>
            <person name="Kawagashira N."/>
            <person name="Kawashima T."/>
            <person name="Kojima M."/>
            <person name="Kondo S."/>
            <person name="Konno H."/>
            <person name="Nakano K."/>
            <person name="Ninomiya N."/>
            <person name="Nishio T."/>
            <person name="Okada M."/>
            <person name="Plessy C."/>
            <person name="Shibata K."/>
            <person name="Shiraki T."/>
            <person name="Suzuki S."/>
            <person name="Tagami M."/>
            <person name="Waki K."/>
            <person name="Watahiki A."/>
            <person name="Okamura-Oho Y."/>
            <person name="Suzuki H."/>
            <person name="Kawai J."/>
            <person name="Hayashizaki Y."/>
        </authorList>
    </citation>
    <scope>NUCLEOTIDE SEQUENCE [LARGE SCALE MRNA]</scope>
    <source>
        <strain>C57BL/6J</strain>
        <tissue>Embryonic stem cell</tissue>
    </source>
</reference>
<reference key="2">
    <citation type="journal article" date="2004" name="Genome Res.">
        <title>The status, quality, and expansion of the NIH full-length cDNA project: the Mammalian Gene Collection (MGC).</title>
        <authorList>
            <consortium name="The MGC Project Team"/>
        </authorList>
    </citation>
    <scope>NUCLEOTIDE SEQUENCE [LARGE SCALE MRNA]</scope>
    <source>
        <tissue>Mammary gland</tissue>
    </source>
</reference>
<reference key="3">
    <citation type="journal article" date="2010" name="Cell">
        <title>A tissue-specific atlas of mouse protein phosphorylation and expression.</title>
        <authorList>
            <person name="Huttlin E.L."/>
            <person name="Jedrychowski M.P."/>
            <person name="Elias J.E."/>
            <person name="Goswami T."/>
            <person name="Rad R."/>
            <person name="Beausoleil S.A."/>
            <person name="Villen J."/>
            <person name="Haas W."/>
            <person name="Sowa M.E."/>
            <person name="Gygi S.P."/>
        </authorList>
    </citation>
    <scope>IDENTIFICATION BY MASS SPECTROMETRY [LARGE SCALE ANALYSIS]</scope>
    <source>
        <tissue>Brain</tissue>
        <tissue>Brown adipose tissue</tissue>
        <tissue>Heart</tissue>
        <tissue>Kidney</tissue>
        <tissue>Lung</tissue>
        <tissue>Spleen</tissue>
        <tissue>Testis</tissue>
    </source>
</reference>
<reference key="4">
    <citation type="journal article" date="2020" name="J. Clin. Invest.">
        <title>Mutations in the iron-sulfur cluster biogenesis protein HSCB cause congenital sideroblastic anemia.</title>
        <authorList>
            <person name="Crispin A."/>
            <person name="Guo C."/>
            <person name="Chen C."/>
            <person name="Campagna D.R."/>
            <person name="Schmidt P.J."/>
            <person name="Lichtenstein D."/>
            <person name="Cao C."/>
            <person name="Sendamarai A.K."/>
            <person name="Hildick-Smith G.J."/>
            <person name="Huston N.C."/>
            <person name="Boudreaux J."/>
            <person name="Bottomley S.S."/>
            <person name="Heeney M.M."/>
            <person name="Paw B.H."/>
            <person name="Fleming M.D."/>
            <person name="Ducamp S."/>
        </authorList>
    </citation>
    <scope>DISRUPTION PHENOTYPE</scope>
    <scope>FUNCTION</scope>
</reference>
<organism>
    <name type="scientific">Mus musculus</name>
    <name type="common">Mouse</name>
    <dbReference type="NCBI Taxonomy" id="10090"/>
    <lineage>
        <taxon>Eukaryota</taxon>
        <taxon>Metazoa</taxon>
        <taxon>Chordata</taxon>
        <taxon>Craniata</taxon>
        <taxon>Vertebrata</taxon>
        <taxon>Euteleostomi</taxon>
        <taxon>Mammalia</taxon>
        <taxon>Eutheria</taxon>
        <taxon>Euarchontoglires</taxon>
        <taxon>Glires</taxon>
        <taxon>Rodentia</taxon>
        <taxon>Myomorpha</taxon>
        <taxon>Muroidea</taxon>
        <taxon>Muridae</taxon>
        <taxon>Murinae</taxon>
        <taxon>Mus</taxon>
        <taxon>Mus</taxon>
    </lineage>
</organism>